<comment type="similarity">
    <text evidence="1">Belongs to the lysopine/nopaline/octopine/opine/vitopine dehydrogenases family.</text>
</comment>
<gene>
    <name type="primary">vis</name>
    <name type="ordered locus">Avi_8271</name>
</gene>
<evidence type="ECO:0000305" key="1"/>
<reference key="1">
    <citation type="journal article" date="1992" name="Mol. Gen. Genet.">
        <title>Organization and functional analysis of three T-DNAs from the vitopine Ti plasmid pTiS4.</title>
        <authorList>
            <person name="Canaday J."/>
            <person name="Gerard J.-C."/>
            <person name="Crouzet P."/>
            <person name="Otten L."/>
        </authorList>
    </citation>
    <scope>NUCLEOTIDE SEQUENCE [GENOMIC DNA]</scope>
</reference>
<reference key="2">
    <citation type="journal article" date="2009" name="J. Bacteriol.">
        <title>Genome sequences of three Agrobacterium biovars help elucidate the evolution of multichromosome genomes in bacteria.</title>
        <authorList>
            <person name="Slater S.C."/>
            <person name="Goldman B.S."/>
            <person name="Goodner B."/>
            <person name="Setubal J.C."/>
            <person name="Farrand S.K."/>
            <person name="Nester E.W."/>
            <person name="Burr T.J."/>
            <person name="Banta L."/>
            <person name="Dickerman A.W."/>
            <person name="Paulsen I."/>
            <person name="Otten L."/>
            <person name="Suen G."/>
            <person name="Welch R."/>
            <person name="Almeida N.F."/>
            <person name="Arnold F."/>
            <person name="Burton O.T."/>
            <person name="Du Z."/>
            <person name="Ewing A."/>
            <person name="Godsy E."/>
            <person name="Heisel S."/>
            <person name="Houmiel K.L."/>
            <person name="Jhaveri J."/>
            <person name="Lu J."/>
            <person name="Miller N.M."/>
            <person name="Norton S."/>
            <person name="Chen Q."/>
            <person name="Phoolcharoen W."/>
            <person name="Ohlin V."/>
            <person name="Ondrusek D."/>
            <person name="Pride N."/>
            <person name="Stricklin S.L."/>
            <person name="Sun J."/>
            <person name="Wheeler C."/>
            <person name="Wilson L."/>
            <person name="Zhu H."/>
            <person name="Wood D.W."/>
        </authorList>
    </citation>
    <scope>NUCLEOTIDE SEQUENCE [LARGE SCALE GENOMIC DNA]</scope>
    <source>
        <strain>ATCC BAA-846 / DSM 112012 / S4</strain>
    </source>
</reference>
<sequence length="360" mass="39700">MSKVAILGAGNLALTFAGDIARRLNEEVTAVIWAPTTNRRNFNEVRGIGTLELVGPDYEGAFTPQLEDDLEAAILDAEFIFLTVPTLAQEGILRELVKFDLSETVLIALPGSATSLTCKNILFPSHSPVAVIESTTSPYACRRIGERVHMLGVKACFEVAATSLLSNDLTSRFEALFPNRLQWYKDAASIFFSNTNPVVHPPGILVAKDAIENGMSPLPKFYREFVPAAIERVQELDNERLEIIAALGLESETGFTYSKKWYGGQATEWKEFFETYEGYAEVGTPTTMHHRYLTEDVKHIMVLWVQIAEVAGVQVPAMKSVIKEAGNVLYEDLFMTGRTLASMNLGGANPYRIVDALNGN</sequence>
<protein>
    <recommendedName>
        <fullName>Vitopine synthase</fullName>
        <ecNumber>1.5.1.-</ecNumber>
    </recommendedName>
</protein>
<organism>
    <name type="scientific">Allorhizobium ampelinum (strain ATCC BAA-846 / DSM 112012 / S4)</name>
    <name type="common">Agrobacterium vitis (strain S4)</name>
    <dbReference type="NCBI Taxonomy" id="311402"/>
    <lineage>
        <taxon>Bacteria</taxon>
        <taxon>Pseudomonadati</taxon>
        <taxon>Pseudomonadota</taxon>
        <taxon>Alphaproteobacteria</taxon>
        <taxon>Hyphomicrobiales</taxon>
        <taxon>Rhizobiaceae</taxon>
        <taxon>Rhizobium/Agrobacterium group</taxon>
        <taxon>Allorhizobium</taxon>
        <taxon>Allorhizobium ampelinum</taxon>
    </lineage>
</organism>
<feature type="chain" id="PRO_0000179981" description="Vitopine synthase">
    <location>
        <begin position="1"/>
        <end position="360"/>
    </location>
</feature>
<accession>Q04554</accession>
<accession>B9K444</accession>
<keyword id="KW-0192">Crown gall tumor</keyword>
<keyword id="KW-0560">Oxidoreductase</keyword>
<keyword id="KW-0614">Plasmid</keyword>
<keyword id="KW-1185">Reference proteome</keyword>
<geneLocation type="plasmid">
    <name>pTiS4</name>
</geneLocation>
<proteinExistence type="inferred from homology"/>
<name>VIS_ALLAM</name>
<dbReference type="EC" id="1.5.1.-"/>
<dbReference type="EMBL" id="M91608">
    <property type="protein sequence ID" value="AAA25044.1"/>
    <property type="molecule type" value="Genomic_DNA"/>
</dbReference>
<dbReference type="EMBL" id="CP000637">
    <property type="protein sequence ID" value="ACM39698.1"/>
    <property type="molecule type" value="Genomic_DNA"/>
</dbReference>
<dbReference type="PIR" id="S30109">
    <property type="entry name" value="S30109"/>
</dbReference>
<dbReference type="RefSeq" id="WP_012649057.1">
    <property type="nucleotide sequence ID" value="NC_011982.1"/>
</dbReference>
<dbReference type="SMR" id="Q04554"/>
<dbReference type="KEGG" id="avi:Avi_8271"/>
<dbReference type="HOGENOM" id="CLU_056511_0_0_5"/>
<dbReference type="Proteomes" id="UP000001596">
    <property type="component" value="Plasmid pTiS4"/>
</dbReference>
<dbReference type="GO" id="GO:0016491">
    <property type="term" value="F:oxidoreductase activity"/>
    <property type="evidence" value="ECO:0007669"/>
    <property type="project" value="UniProtKB-KW"/>
</dbReference>
<dbReference type="Gene3D" id="1.10.1040.10">
    <property type="entry name" value="N-(1-d-carboxylethyl)-l-norvaline Dehydrogenase, domain 2"/>
    <property type="match status" value="1"/>
</dbReference>
<dbReference type="Gene3D" id="3.40.50.720">
    <property type="entry name" value="NAD(P)-binding Rossmann-like Domain"/>
    <property type="match status" value="1"/>
</dbReference>
<dbReference type="InterPro" id="IPR008927">
    <property type="entry name" value="6-PGluconate_DH-like_C_sf"/>
</dbReference>
<dbReference type="InterPro" id="IPR013328">
    <property type="entry name" value="6PGD_dom2"/>
</dbReference>
<dbReference type="InterPro" id="IPR036291">
    <property type="entry name" value="NAD(P)-bd_dom_sf"/>
</dbReference>
<dbReference type="InterPro" id="IPR051729">
    <property type="entry name" value="Opine/Lysopine_DH"/>
</dbReference>
<dbReference type="InterPro" id="IPR003421">
    <property type="entry name" value="Opine_DH"/>
</dbReference>
<dbReference type="PANTHER" id="PTHR38015">
    <property type="entry name" value="BLR6086 PROTEIN"/>
    <property type="match status" value="1"/>
</dbReference>
<dbReference type="PANTHER" id="PTHR38015:SF1">
    <property type="entry name" value="OPINE DEHYDROGENASE DOMAIN-CONTAINING PROTEIN"/>
    <property type="match status" value="1"/>
</dbReference>
<dbReference type="Pfam" id="PF02317">
    <property type="entry name" value="Octopine_DH"/>
    <property type="match status" value="1"/>
</dbReference>
<dbReference type="SUPFAM" id="SSF48179">
    <property type="entry name" value="6-phosphogluconate dehydrogenase C-terminal domain-like"/>
    <property type="match status" value="1"/>
</dbReference>
<dbReference type="SUPFAM" id="SSF51735">
    <property type="entry name" value="NAD(P)-binding Rossmann-fold domains"/>
    <property type="match status" value="1"/>
</dbReference>